<dbReference type="EMBL" id="CP000360">
    <property type="protein sequence ID" value="ABF40246.1"/>
    <property type="molecule type" value="Genomic_DNA"/>
</dbReference>
<dbReference type="RefSeq" id="WP_011522048.1">
    <property type="nucleotide sequence ID" value="NC_008009.1"/>
</dbReference>
<dbReference type="SMR" id="Q1ISA4"/>
<dbReference type="STRING" id="204669.Acid345_1244"/>
<dbReference type="EnsemblBacteria" id="ABF40246">
    <property type="protein sequence ID" value="ABF40246"/>
    <property type="gene ID" value="Acid345_1244"/>
</dbReference>
<dbReference type="KEGG" id="aba:Acid345_1244"/>
<dbReference type="eggNOG" id="COG1841">
    <property type="taxonomic scope" value="Bacteria"/>
</dbReference>
<dbReference type="HOGENOM" id="CLU_131047_1_3_0"/>
<dbReference type="OrthoDB" id="9812790at2"/>
<dbReference type="Proteomes" id="UP000002432">
    <property type="component" value="Chromosome"/>
</dbReference>
<dbReference type="GO" id="GO:0015934">
    <property type="term" value="C:large ribosomal subunit"/>
    <property type="evidence" value="ECO:0007669"/>
    <property type="project" value="InterPro"/>
</dbReference>
<dbReference type="GO" id="GO:0003735">
    <property type="term" value="F:structural constituent of ribosome"/>
    <property type="evidence" value="ECO:0007669"/>
    <property type="project" value="InterPro"/>
</dbReference>
<dbReference type="GO" id="GO:0006412">
    <property type="term" value="P:translation"/>
    <property type="evidence" value="ECO:0007669"/>
    <property type="project" value="UniProtKB-UniRule"/>
</dbReference>
<dbReference type="CDD" id="cd01658">
    <property type="entry name" value="Ribosomal_L30"/>
    <property type="match status" value="1"/>
</dbReference>
<dbReference type="Gene3D" id="3.30.1390.20">
    <property type="entry name" value="Ribosomal protein L30, ferredoxin-like fold domain"/>
    <property type="match status" value="1"/>
</dbReference>
<dbReference type="HAMAP" id="MF_01371_B">
    <property type="entry name" value="Ribosomal_uL30_B"/>
    <property type="match status" value="1"/>
</dbReference>
<dbReference type="InterPro" id="IPR036919">
    <property type="entry name" value="Ribo_uL30_ferredoxin-like_sf"/>
</dbReference>
<dbReference type="InterPro" id="IPR005996">
    <property type="entry name" value="Ribosomal_uL30_bac-type"/>
</dbReference>
<dbReference type="InterPro" id="IPR016082">
    <property type="entry name" value="Ribosomal_uL30_ferredoxin-like"/>
</dbReference>
<dbReference type="NCBIfam" id="TIGR01308">
    <property type="entry name" value="rpmD_bact"/>
    <property type="match status" value="1"/>
</dbReference>
<dbReference type="Pfam" id="PF00327">
    <property type="entry name" value="Ribosomal_L30"/>
    <property type="match status" value="1"/>
</dbReference>
<dbReference type="SUPFAM" id="SSF55129">
    <property type="entry name" value="Ribosomal protein L30p/L7e"/>
    <property type="match status" value="1"/>
</dbReference>
<evidence type="ECO:0000255" key="1">
    <source>
        <dbReference type="HAMAP-Rule" id="MF_01371"/>
    </source>
</evidence>
<evidence type="ECO:0000305" key="2"/>
<sequence length="74" mass="8345">MPRTRKKVEVKVAPKGAKLQLKWIRSAIQAPVKHKLVIKGLGFTRLNQVIVREDSPSIRGMVAKVPHLVEIVQQ</sequence>
<comment type="subunit">
    <text evidence="1">Part of the 50S ribosomal subunit.</text>
</comment>
<comment type="similarity">
    <text evidence="1">Belongs to the universal ribosomal protein uL30 family.</text>
</comment>
<protein>
    <recommendedName>
        <fullName evidence="1">Large ribosomal subunit protein uL30</fullName>
    </recommendedName>
    <alternativeName>
        <fullName evidence="2">50S ribosomal protein L30</fullName>
    </alternativeName>
</protein>
<keyword id="KW-1185">Reference proteome</keyword>
<keyword id="KW-0687">Ribonucleoprotein</keyword>
<keyword id="KW-0689">Ribosomal protein</keyword>
<organism>
    <name type="scientific">Koribacter versatilis (strain Ellin345)</name>
    <dbReference type="NCBI Taxonomy" id="204669"/>
    <lineage>
        <taxon>Bacteria</taxon>
        <taxon>Pseudomonadati</taxon>
        <taxon>Acidobacteriota</taxon>
        <taxon>Terriglobia</taxon>
        <taxon>Terriglobales</taxon>
        <taxon>Candidatus Korobacteraceae</taxon>
        <taxon>Candidatus Korobacter</taxon>
    </lineage>
</organism>
<proteinExistence type="inferred from homology"/>
<name>RL30_KORVE</name>
<reference key="1">
    <citation type="journal article" date="2009" name="Appl. Environ. Microbiol.">
        <title>Three genomes from the phylum Acidobacteria provide insight into the lifestyles of these microorganisms in soils.</title>
        <authorList>
            <person name="Ward N.L."/>
            <person name="Challacombe J.F."/>
            <person name="Janssen P.H."/>
            <person name="Henrissat B."/>
            <person name="Coutinho P.M."/>
            <person name="Wu M."/>
            <person name="Xie G."/>
            <person name="Haft D.H."/>
            <person name="Sait M."/>
            <person name="Badger J."/>
            <person name="Barabote R.D."/>
            <person name="Bradley B."/>
            <person name="Brettin T.S."/>
            <person name="Brinkac L.M."/>
            <person name="Bruce D."/>
            <person name="Creasy T."/>
            <person name="Daugherty S.C."/>
            <person name="Davidsen T.M."/>
            <person name="DeBoy R.T."/>
            <person name="Detter J.C."/>
            <person name="Dodson R.J."/>
            <person name="Durkin A.S."/>
            <person name="Ganapathy A."/>
            <person name="Gwinn-Giglio M."/>
            <person name="Han C.S."/>
            <person name="Khouri H."/>
            <person name="Kiss H."/>
            <person name="Kothari S.P."/>
            <person name="Madupu R."/>
            <person name="Nelson K.E."/>
            <person name="Nelson W.C."/>
            <person name="Paulsen I."/>
            <person name="Penn K."/>
            <person name="Ren Q."/>
            <person name="Rosovitz M.J."/>
            <person name="Selengut J.D."/>
            <person name="Shrivastava S."/>
            <person name="Sullivan S.A."/>
            <person name="Tapia R."/>
            <person name="Thompson L.S."/>
            <person name="Watkins K.L."/>
            <person name="Yang Q."/>
            <person name="Yu C."/>
            <person name="Zafar N."/>
            <person name="Zhou L."/>
            <person name="Kuske C.R."/>
        </authorList>
    </citation>
    <scope>NUCLEOTIDE SEQUENCE [LARGE SCALE GENOMIC DNA]</scope>
    <source>
        <strain>Ellin345</strain>
    </source>
</reference>
<gene>
    <name evidence="1" type="primary">rpmD</name>
    <name type="ordered locus">Acid345_1244</name>
</gene>
<accession>Q1ISA4</accession>
<feature type="chain" id="PRO_0000347069" description="Large ribosomal subunit protein uL30">
    <location>
        <begin position="1"/>
        <end position="74"/>
    </location>
</feature>